<protein>
    <recommendedName>
        <fullName evidence="1">NADH-quinone oxidoreductase subunit K</fullName>
        <ecNumber evidence="1">7.1.1.-</ecNumber>
    </recommendedName>
    <alternativeName>
        <fullName evidence="1">NADH dehydrogenase I subunit K</fullName>
    </alternativeName>
    <alternativeName>
        <fullName evidence="1">NDH-1 subunit K</fullName>
    </alternativeName>
</protein>
<organism>
    <name type="scientific">Proteus mirabilis (strain HI4320)</name>
    <dbReference type="NCBI Taxonomy" id="529507"/>
    <lineage>
        <taxon>Bacteria</taxon>
        <taxon>Pseudomonadati</taxon>
        <taxon>Pseudomonadota</taxon>
        <taxon>Gammaproteobacteria</taxon>
        <taxon>Enterobacterales</taxon>
        <taxon>Morganellaceae</taxon>
        <taxon>Proteus</taxon>
    </lineage>
</organism>
<comment type="function">
    <text evidence="1">NDH-1 shuttles electrons from NADH, via FMN and iron-sulfur (Fe-S) centers, to quinones in the respiratory chain. The immediate electron acceptor for the enzyme in this species is believed to be ubiquinone. Couples the redox reaction to proton translocation (for every two electrons transferred, four hydrogen ions are translocated across the cytoplasmic membrane), and thus conserves the redox energy in a proton gradient.</text>
</comment>
<comment type="catalytic activity">
    <reaction evidence="1">
        <text>a quinone + NADH + 5 H(+)(in) = a quinol + NAD(+) + 4 H(+)(out)</text>
        <dbReference type="Rhea" id="RHEA:57888"/>
        <dbReference type="ChEBI" id="CHEBI:15378"/>
        <dbReference type="ChEBI" id="CHEBI:24646"/>
        <dbReference type="ChEBI" id="CHEBI:57540"/>
        <dbReference type="ChEBI" id="CHEBI:57945"/>
        <dbReference type="ChEBI" id="CHEBI:132124"/>
    </reaction>
</comment>
<comment type="subunit">
    <text evidence="1">NDH-1 is composed of 13 different subunits. Subunits NuoA, H, J, K, L, M, N constitute the membrane sector of the complex.</text>
</comment>
<comment type="subcellular location">
    <subcellularLocation>
        <location evidence="1">Cell inner membrane</location>
        <topology evidence="1">Multi-pass membrane protein</topology>
    </subcellularLocation>
</comment>
<comment type="similarity">
    <text evidence="1">Belongs to the complex I subunit 4L family.</text>
</comment>
<proteinExistence type="inferred from homology"/>
<reference key="1">
    <citation type="journal article" date="2008" name="J. Bacteriol.">
        <title>Complete genome sequence of uropathogenic Proteus mirabilis, a master of both adherence and motility.</title>
        <authorList>
            <person name="Pearson M.M."/>
            <person name="Sebaihia M."/>
            <person name="Churcher C."/>
            <person name="Quail M.A."/>
            <person name="Seshasayee A.S."/>
            <person name="Luscombe N.M."/>
            <person name="Abdellah Z."/>
            <person name="Arrosmith C."/>
            <person name="Atkin B."/>
            <person name="Chillingworth T."/>
            <person name="Hauser H."/>
            <person name="Jagels K."/>
            <person name="Moule S."/>
            <person name="Mungall K."/>
            <person name="Norbertczak H."/>
            <person name="Rabbinowitsch E."/>
            <person name="Walker D."/>
            <person name="Whithead S."/>
            <person name="Thomson N.R."/>
            <person name="Rather P.N."/>
            <person name="Parkhill J."/>
            <person name="Mobley H.L.T."/>
        </authorList>
    </citation>
    <scope>NUCLEOTIDE SEQUENCE [LARGE SCALE GENOMIC DNA]</scope>
    <source>
        <strain>HI4320</strain>
    </source>
</reference>
<gene>
    <name evidence="1" type="primary">nuoK</name>
    <name type="ordered locus">PMI1753</name>
</gene>
<evidence type="ECO:0000255" key="1">
    <source>
        <dbReference type="HAMAP-Rule" id="MF_01456"/>
    </source>
</evidence>
<keyword id="KW-0997">Cell inner membrane</keyword>
<keyword id="KW-1003">Cell membrane</keyword>
<keyword id="KW-0472">Membrane</keyword>
<keyword id="KW-0520">NAD</keyword>
<keyword id="KW-0874">Quinone</keyword>
<keyword id="KW-1185">Reference proteome</keyword>
<keyword id="KW-1278">Translocase</keyword>
<keyword id="KW-0812">Transmembrane</keyword>
<keyword id="KW-1133">Transmembrane helix</keyword>
<keyword id="KW-0813">Transport</keyword>
<keyword id="KW-0830">Ubiquinone</keyword>
<dbReference type="EC" id="7.1.1.-" evidence="1"/>
<dbReference type="EMBL" id="AM942759">
    <property type="protein sequence ID" value="CAR43654.1"/>
    <property type="molecule type" value="Genomic_DNA"/>
</dbReference>
<dbReference type="RefSeq" id="WP_004243687.1">
    <property type="nucleotide sequence ID" value="NC_010554.1"/>
</dbReference>
<dbReference type="SMR" id="B4EZ50"/>
<dbReference type="EnsemblBacteria" id="CAR43654">
    <property type="protein sequence ID" value="CAR43654"/>
    <property type="gene ID" value="PMI1753"/>
</dbReference>
<dbReference type="GeneID" id="6801424"/>
<dbReference type="KEGG" id="pmr:PMI1753"/>
<dbReference type="eggNOG" id="COG0713">
    <property type="taxonomic scope" value="Bacteria"/>
</dbReference>
<dbReference type="HOGENOM" id="CLU_144724_0_1_6"/>
<dbReference type="Proteomes" id="UP000008319">
    <property type="component" value="Chromosome"/>
</dbReference>
<dbReference type="GO" id="GO:0030964">
    <property type="term" value="C:NADH dehydrogenase complex"/>
    <property type="evidence" value="ECO:0007669"/>
    <property type="project" value="TreeGrafter"/>
</dbReference>
<dbReference type="GO" id="GO:0005886">
    <property type="term" value="C:plasma membrane"/>
    <property type="evidence" value="ECO:0007669"/>
    <property type="project" value="UniProtKB-SubCell"/>
</dbReference>
<dbReference type="GO" id="GO:0050136">
    <property type="term" value="F:NADH:ubiquinone reductase (non-electrogenic) activity"/>
    <property type="evidence" value="ECO:0007669"/>
    <property type="project" value="UniProtKB-UniRule"/>
</dbReference>
<dbReference type="GO" id="GO:0048038">
    <property type="term" value="F:quinone binding"/>
    <property type="evidence" value="ECO:0007669"/>
    <property type="project" value="UniProtKB-KW"/>
</dbReference>
<dbReference type="GO" id="GO:0042773">
    <property type="term" value="P:ATP synthesis coupled electron transport"/>
    <property type="evidence" value="ECO:0007669"/>
    <property type="project" value="InterPro"/>
</dbReference>
<dbReference type="FunFam" id="1.10.287.3510:FF:000001">
    <property type="entry name" value="NADH-quinone oxidoreductase subunit K"/>
    <property type="match status" value="1"/>
</dbReference>
<dbReference type="Gene3D" id="1.10.287.3510">
    <property type="match status" value="1"/>
</dbReference>
<dbReference type="HAMAP" id="MF_01456">
    <property type="entry name" value="NDH1_NuoK"/>
    <property type="match status" value="1"/>
</dbReference>
<dbReference type="InterPro" id="IPR001133">
    <property type="entry name" value="NADH_UbQ_OxRdtase_chain4L/K"/>
</dbReference>
<dbReference type="InterPro" id="IPR039428">
    <property type="entry name" value="NUOK/Mnh_C1-like"/>
</dbReference>
<dbReference type="NCBIfam" id="NF004319">
    <property type="entry name" value="PRK05715.1-1"/>
    <property type="match status" value="1"/>
</dbReference>
<dbReference type="NCBIfam" id="NF004320">
    <property type="entry name" value="PRK05715.1-2"/>
    <property type="match status" value="1"/>
</dbReference>
<dbReference type="PANTHER" id="PTHR11434:SF16">
    <property type="entry name" value="NADH-UBIQUINONE OXIDOREDUCTASE CHAIN 4L"/>
    <property type="match status" value="1"/>
</dbReference>
<dbReference type="PANTHER" id="PTHR11434">
    <property type="entry name" value="NADH-UBIQUINONE OXIDOREDUCTASE SUBUNIT ND4L"/>
    <property type="match status" value="1"/>
</dbReference>
<dbReference type="Pfam" id="PF00420">
    <property type="entry name" value="Oxidored_q2"/>
    <property type="match status" value="1"/>
</dbReference>
<accession>B4EZ50</accession>
<name>NUOK_PROMH</name>
<feature type="chain" id="PRO_0000390161" description="NADH-quinone oxidoreductase subunit K">
    <location>
        <begin position="1"/>
        <end position="100"/>
    </location>
</feature>
<feature type="transmembrane region" description="Helical" evidence="1">
    <location>
        <begin position="4"/>
        <end position="24"/>
    </location>
</feature>
<feature type="transmembrane region" description="Helical" evidence="1">
    <location>
        <begin position="28"/>
        <end position="48"/>
    </location>
</feature>
<feature type="transmembrane region" description="Helical" evidence="1">
    <location>
        <begin position="60"/>
        <end position="80"/>
    </location>
</feature>
<sequence length="100" mass="10906">MIPLQHGLILAAVLFVLGFTCLVLRRNLLFMLIGLEIMINSAALAFVVGGSYWGQTDGQIMYILAISLAAAEASIGLALLLQLHRHRQNLNIDTVSEMRG</sequence>